<name>METRN_HUMAN</name>
<comment type="function">
    <text evidence="1">Involved in both glial cell differentiation and axonal network formation during neurogenesis. Promotes astrocyte differentiation and transforms cerebellar astrocytes into radial glia. Also induces axonal extension in small and intermediate neurons of sensory ganglia by activating nearby satellite glia (By similarity).</text>
</comment>
<comment type="subunit">
    <text evidence="1">Monomer.</text>
</comment>
<comment type="subcellular location">
    <subcellularLocation>
        <location evidence="1">Secreted</location>
    </subcellularLocation>
</comment>
<comment type="similarity">
    <text evidence="3">Belongs to the meteorin family.</text>
</comment>
<organism>
    <name type="scientific">Homo sapiens</name>
    <name type="common">Human</name>
    <dbReference type="NCBI Taxonomy" id="9606"/>
    <lineage>
        <taxon>Eukaryota</taxon>
        <taxon>Metazoa</taxon>
        <taxon>Chordata</taxon>
        <taxon>Craniata</taxon>
        <taxon>Vertebrata</taxon>
        <taxon>Euteleostomi</taxon>
        <taxon>Mammalia</taxon>
        <taxon>Eutheria</taxon>
        <taxon>Euarchontoglires</taxon>
        <taxon>Primates</taxon>
        <taxon>Haplorrhini</taxon>
        <taxon>Catarrhini</taxon>
        <taxon>Hominidae</taxon>
        <taxon>Homo</taxon>
    </lineage>
</organism>
<accession>Q9UJH8</accession>
<accession>Q9UJH9</accession>
<evidence type="ECO:0000250" key="1"/>
<evidence type="ECO:0000255" key="2">
    <source>
        <dbReference type="PROSITE-ProRule" id="PRU00114"/>
    </source>
</evidence>
<evidence type="ECO:0000305" key="3"/>
<gene>
    <name type="primary">METRN</name>
    <name type="synonym">C16orf23</name>
    <name type="ORF">RJD6</name>
</gene>
<feature type="signal peptide" evidence="1">
    <location>
        <begin position="1"/>
        <end position="23"/>
    </location>
</feature>
<feature type="chain" id="PRO_0000021680" description="Meteorin">
    <location>
        <begin position="24"/>
        <end position="293"/>
    </location>
</feature>
<feature type="disulfide bond" evidence="2">
    <location>
        <begin position="30"/>
        <end position="51"/>
    </location>
</feature>
<feature type="disulfide bond" evidence="2">
    <location>
        <begin position="82"/>
        <end position="118"/>
    </location>
</feature>
<feature type="disulfide bond" evidence="2">
    <location>
        <begin position="171"/>
        <end position="242"/>
    </location>
</feature>
<feature type="disulfide bond" evidence="2">
    <location>
        <begin position="174"/>
        <end position="266"/>
    </location>
</feature>
<feature type="disulfide bond" evidence="2">
    <location>
        <begin position="184"/>
        <end position="288"/>
    </location>
</feature>
<dbReference type="EMBL" id="AE006464">
    <property type="protein sequence ID" value="AAK61247.1"/>
    <property type="molecule type" value="Genomic_DNA"/>
</dbReference>
<dbReference type="EMBL" id="Z97653">
    <property type="status" value="NOT_ANNOTATED_CDS"/>
    <property type="molecule type" value="Genomic_DNA"/>
</dbReference>
<dbReference type="EMBL" id="BC000662">
    <property type="protein sequence ID" value="AAH00662.1"/>
    <property type="molecule type" value="mRNA"/>
</dbReference>
<dbReference type="CCDS" id="CCDS10422.1"/>
<dbReference type="RefSeq" id="NP_076947.1">
    <property type="nucleotide sequence ID" value="NM_024042.4"/>
</dbReference>
<dbReference type="SMR" id="Q9UJH8"/>
<dbReference type="BioGRID" id="122477">
    <property type="interactions" value="81"/>
</dbReference>
<dbReference type="FunCoup" id="Q9UJH8">
    <property type="interactions" value="261"/>
</dbReference>
<dbReference type="IntAct" id="Q9UJH8">
    <property type="interactions" value="42"/>
</dbReference>
<dbReference type="MINT" id="Q9UJH8"/>
<dbReference type="STRING" id="9606.ENSP00000455068"/>
<dbReference type="GlyGen" id="Q9UJH8">
    <property type="glycosylation" value="1 site, 1 O-linked glycan (1 site)"/>
</dbReference>
<dbReference type="iPTMnet" id="Q9UJH8"/>
<dbReference type="PhosphoSitePlus" id="Q9UJH8"/>
<dbReference type="BioMuta" id="METRN"/>
<dbReference type="DMDM" id="50401202"/>
<dbReference type="jPOST" id="Q9UJH8"/>
<dbReference type="MassIVE" id="Q9UJH8"/>
<dbReference type="PaxDb" id="9606-ENSP00000455068"/>
<dbReference type="PeptideAtlas" id="Q9UJH8"/>
<dbReference type="ProteomicsDB" id="84625"/>
<dbReference type="Antibodypedia" id="22849">
    <property type="antibodies" value="109 antibodies from 15 providers"/>
</dbReference>
<dbReference type="DNASU" id="79006"/>
<dbReference type="Ensembl" id="ENST00000568223.7">
    <property type="protein sequence ID" value="ENSP00000455068.1"/>
    <property type="gene ID" value="ENSG00000103260.9"/>
</dbReference>
<dbReference type="GeneID" id="79006"/>
<dbReference type="KEGG" id="hsa:79006"/>
<dbReference type="MANE-Select" id="ENST00000568223.7">
    <property type="protein sequence ID" value="ENSP00000455068.1"/>
    <property type="RefSeq nucleotide sequence ID" value="NM_024042.4"/>
    <property type="RefSeq protein sequence ID" value="NP_076947.1"/>
</dbReference>
<dbReference type="UCSC" id="uc010bra.4">
    <property type="organism name" value="human"/>
</dbReference>
<dbReference type="AGR" id="HGNC:14151"/>
<dbReference type="CTD" id="79006"/>
<dbReference type="DisGeNET" id="79006"/>
<dbReference type="GeneCards" id="METRN"/>
<dbReference type="HGNC" id="HGNC:14151">
    <property type="gene designation" value="METRN"/>
</dbReference>
<dbReference type="HPA" id="ENSG00000103260">
    <property type="expression patterns" value="Tissue enhanced (brain, choroid plexus)"/>
</dbReference>
<dbReference type="MIM" id="610998">
    <property type="type" value="gene"/>
</dbReference>
<dbReference type="neXtProt" id="NX_Q9UJH8"/>
<dbReference type="OpenTargets" id="ENSG00000103260"/>
<dbReference type="PharmGKB" id="PA25537"/>
<dbReference type="VEuPathDB" id="HostDB:ENSG00000103260"/>
<dbReference type="eggNOG" id="ENOG502QUQB">
    <property type="taxonomic scope" value="Eukaryota"/>
</dbReference>
<dbReference type="GeneTree" id="ENSGT00390000001390"/>
<dbReference type="HOGENOM" id="CLU_069970_0_0_1"/>
<dbReference type="InParanoid" id="Q9UJH8"/>
<dbReference type="OMA" id="VHWGPRE"/>
<dbReference type="OrthoDB" id="6092325at2759"/>
<dbReference type="PAN-GO" id="Q9UJH8">
    <property type="GO annotations" value="4 GO annotations based on evolutionary models"/>
</dbReference>
<dbReference type="PhylomeDB" id="Q9UJH8"/>
<dbReference type="TreeFam" id="TF330918"/>
<dbReference type="PathwayCommons" id="Q9UJH8"/>
<dbReference type="SignaLink" id="Q9UJH8"/>
<dbReference type="BioGRID-ORCS" id="79006">
    <property type="hits" value="19 hits in 1152 CRISPR screens"/>
</dbReference>
<dbReference type="ChiTaRS" id="METRN">
    <property type="organism name" value="human"/>
</dbReference>
<dbReference type="GenomeRNAi" id="79006"/>
<dbReference type="Pharos" id="Q9UJH8">
    <property type="development level" value="Tbio"/>
</dbReference>
<dbReference type="PRO" id="PR:Q9UJH8"/>
<dbReference type="Proteomes" id="UP000005640">
    <property type="component" value="Chromosome 16"/>
</dbReference>
<dbReference type="RNAct" id="Q9UJH8">
    <property type="molecule type" value="protein"/>
</dbReference>
<dbReference type="Bgee" id="ENSG00000103260">
    <property type="expression patterns" value="Expressed in C1 segment of cervical spinal cord and 178 other cell types or tissues"/>
</dbReference>
<dbReference type="ExpressionAtlas" id="Q9UJH8">
    <property type="expression patterns" value="baseline and differential"/>
</dbReference>
<dbReference type="GO" id="GO:0005615">
    <property type="term" value="C:extracellular space"/>
    <property type="evidence" value="ECO:0000318"/>
    <property type="project" value="GO_Central"/>
</dbReference>
<dbReference type="GO" id="GO:0005179">
    <property type="term" value="F:hormone activity"/>
    <property type="evidence" value="ECO:0000318"/>
    <property type="project" value="GO_Central"/>
</dbReference>
<dbReference type="GO" id="GO:0007409">
    <property type="term" value="P:axonogenesis"/>
    <property type="evidence" value="ECO:0007669"/>
    <property type="project" value="Ensembl"/>
</dbReference>
<dbReference type="GO" id="GO:0010001">
    <property type="term" value="P:glial cell differentiation"/>
    <property type="evidence" value="ECO:0000318"/>
    <property type="project" value="GO_Central"/>
</dbReference>
<dbReference type="GO" id="GO:0050772">
    <property type="term" value="P:positive regulation of axonogenesis"/>
    <property type="evidence" value="ECO:0000318"/>
    <property type="project" value="GO_Central"/>
</dbReference>
<dbReference type="GO" id="GO:0060019">
    <property type="term" value="P:radial glial cell differentiation"/>
    <property type="evidence" value="ECO:0007669"/>
    <property type="project" value="Ensembl"/>
</dbReference>
<dbReference type="InterPro" id="IPR051998">
    <property type="entry name" value="Meteorin-like"/>
</dbReference>
<dbReference type="PANTHER" id="PTHR28593:SF2">
    <property type="entry name" value="METEORIN"/>
    <property type="match status" value="1"/>
</dbReference>
<dbReference type="PANTHER" id="PTHR28593">
    <property type="entry name" value="METEORIN-LIKE PROTEIN"/>
    <property type="match status" value="1"/>
</dbReference>
<keyword id="KW-0217">Developmental protein</keyword>
<keyword id="KW-0221">Differentiation</keyword>
<keyword id="KW-1015">Disulfide bond</keyword>
<keyword id="KW-0524">Neurogenesis</keyword>
<keyword id="KW-1267">Proteomics identification</keyword>
<keyword id="KW-1185">Reference proteome</keyword>
<keyword id="KW-0964">Secreted</keyword>
<keyword id="KW-0732">Signal</keyword>
<sequence>MGFPAAALLCALCCGLLAPAARAGYSEERCSWRGSGLTQEPGSVGQLALACAEGAVEWLYPAGALRLTLGGPDPRARPGIACLRPVRPFAGAQVFAERAGGALELLLAEGPGPAGGRCVRWGPRERRALFLQATPHQDISRRVAAFRFELREDGRPELPPQAHGLGVDGACRPCSDAELLLAACTSDFVIHGIIHGVTHDVELQESVITVVAARVLRQTPPLFQAGRSGDQGLTSIRTPLRCGVHPGPGTFLFMGWSRFGEARLGCAPRFQEFRRAYEAARAAHLHPCEVALH</sequence>
<reference key="1">
    <citation type="journal article" date="2004" name="EMBO J.">
        <title>Meteorin: a secreted protein that regulates glial cell differentiation and promotes axonal extension.</title>
        <authorList>
            <person name="Nishino J."/>
            <person name="Yamashita K."/>
            <person name="Hashiguchi H."/>
            <person name="Fujii H."/>
            <person name="Shimazaki T."/>
            <person name="Hamada H."/>
        </authorList>
    </citation>
    <scope>NUCLEOTIDE SEQUENCE [MRNA]</scope>
</reference>
<reference key="2">
    <citation type="journal article" date="2001" name="Hum. Mol. Genet.">
        <title>Sequence, structure and pathology of the fully annotated terminal 2 Mb of the short arm of human chromosome 16.</title>
        <authorList>
            <person name="Daniels R.J."/>
            <person name="Peden J.F."/>
            <person name="Lloyd C."/>
            <person name="Horsley S.W."/>
            <person name="Clark K."/>
            <person name="Tufarelli C."/>
            <person name="Kearney L."/>
            <person name="Buckle V.J."/>
            <person name="Doggett N.A."/>
            <person name="Flint J."/>
            <person name="Higgs D.R."/>
        </authorList>
    </citation>
    <scope>NUCLEOTIDE SEQUENCE [LARGE SCALE GENOMIC DNA]</scope>
</reference>
<reference key="3">
    <citation type="journal article" date="2004" name="Nature">
        <title>The sequence and analysis of duplication-rich human chromosome 16.</title>
        <authorList>
            <person name="Martin J."/>
            <person name="Han C."/>
            <person name="Gordon L.A."/>
            <person name="Terry A."/>
            <person name="Prabhakar S."/>
            <person name="She X."/>
            <person name="Xie G."/>
            <person name="Hellsten U."/>
            <person name="Chan Y.M."/>
            <person name="Altherr M."/>
            <person name="Couronne O."/>
            <person name="Aerts A."/>
            <person name="Bajorek E."/>
            <person name="Black S."/>
            <person name="Blumer H."/>
            <person name="Branscomb E."/>
            <person name="Brown N.C."/>
            <person name="Bruno W.J."/>
            <person name="Buckingham J.M."/>
            <person name="Callen D.F."/>
            <person name="Campbell C.S."/>
            <person name="Campbell M.L."/>
            <person name="Campbell E.W."/>
            <person name="Caoile C."/>
            <person name="Challacombe J.F."/>
            <person name="Chasteen L.A."/>
            <person name="Chertkov O."/>
            <person name="Chi H.C."/>
            <person name="Christensen M."/>
            <person name="Clark L.M."/>
            <person name="Cohn J.D."/>
            <person name="Denys M."/>
            <person name="Detter J.C."/>
            <person name="Dickson M."/>
            <person name="Dimitrijevic-Bussod M."/>
            <person name="Escobar J."/>
            <person name="Fawcett J.J."/>
            <person name="Flowers D."/>
            <person name="Fotopulos D."/>
            <person name="Glavina T."/>
            <person name="Gomez M."/>
            <person name="Gonzales E."/>
            <person name="Goodstein D."/>
            <person name="Goodwin L.A."/>
            <person name="Grady D.L."/>
            <person name="Grigoriev I."/>
            <person name="Groza M."/>
            <person name="Hammon N."/>
            <person name="Hawkins T."/>
            <person name="Haydu L."/>
            <person name="Hildebrand C.E."/>
            <person name="Huang W."/>
            <person name="Israni S."/>
            <person name="Jett J."/>
            <person name="Jewett P.B."/>
            <person name="Kadner K."/>
            <person name="Kimball H."/>
            <person name="Kobayashi A."/>
            <person name="Krawczyk M.-C."/>
            <person name="Leyba T."/>
            <person name="Longmire J.L."/>
            <person name="Lopez F."/>
            <person name="Lou Y."/>
            <person name="Lowry S."/>
            <person name="Ludeman T."/>
            <person name="Manohar C.F."/>
            <person name="Mark G.A."/>
            <person name="McMurray K.L."/>
            <person name="Meincke L.J."/>
            <person name="Morgan J."/>
            <person name="Moyzis R.K."/>
            <person name="Mundt M.O."/>
            <person name="Munk A.C."/>
            <person name="Nandkeshwar R.D."/>
            <person name="Pitluck S."/>
            <person name="Pollard M."/>
            <person name="Predki P."/>
            <person name="Parson-Quintana B."/>
            <person name="Ramirez L."/>
            <person name="Rash S."/>
            <person name="Retterer J."/>
            <person name="Ricke D.O."/>
            <person name="Robinson D.L."/>
            <person name="Rodriguez A."/>
            <person name="Salamov A."/>
            <person name="Saunders E.H."/>
            <person name="Scott D."/>
            <person name="Shough T."/>
            <person name="Stallings R.L."/>
            <person name="Stalvey M."/>
            <person name="Sutherland R.D."/>
            <person name="Tapia R."/>
            <person name="Tesmer J.G."/>
            <person name="Thayer N."/>
            <person name="Thompson L.S."/>
            <person name="Tice H."/>
            <person name="Torney D.C."/>
            <person name="Tran-Gyamfi M."/>
            <person name="Tsai M."/>
            <person name="Ulanovsky L.E."/>
            <person name="Ustaszewska A."/>
            <person name="Vo N."/>
            <person name="White P.S."/>
            <person name="Williams A.L."/>
            <person name="Wills P.L."/>
            <person name="Wu J.-R."/>
            <person name="Wu K."/>
            <person name="Yang J."/>
            <person name="DeJong P."/>
            <person name="Bruce D."/>
            <person name="Doggett N.A."/>
            <person name="Deaven L."/>
            <person name="Schmutz J."/>
            <person name="Grimwood J."/>
            <person name="Richardson P."/>
            <person name="Rokhsar D.S."/>
            <person name="Eichler E.E."/>
            <person name="Gilna P."/>
            <person name="Lucas S.M."/>
            <person name="Myers R.M."/>
            <person name="Rubin E.M."/>
            <person name="Pennacchio L.A."/>
        </authorList>
    </citation>
    <scope>NUCLEOTIDE SEQUENCE [LARGE SCALE GENOMIC DNA]</scope>
</reference>
<reference key="4">
    <citation type="journal article" date="2004" name="Genome Res.">
        <title>The status, quality, and expansion of the NIH full-length cDNA project: the Mammalian Gene Collection (MGC).</title>
        <authorList>
            <consortium name="The MGC Project Team"/>
        </authorList>
    </citation>
    <scope>NUCLEOTIDE SEQUENCE [LARGE SCALE MRNA]</scope>
    <source>
        <tissue>Kidney</tissue>
    </source>
</reference>
<proteinExistence type="evidence at protein level"/>
<protein>
    <recommendedName>
        <fullName>Meteorin</fullName>
    </recommendedName>
</protein>